<evidence type="ECO:0000255" key="1">
    <source>
        <dbReference type="HAMAP-Rule" id="MF_00144"/>
    </source>
</evidence>
<keyword id="KW-0067">ATP-binding</keyword>
<keyword id="KW-0963">Cytoplasm</keyword>
<keyword id="KW-1015">Disulfide bond</keyword>
<keyword id="KW-0547">Nucleotide-binding</keyword>
<keyword id="KW-0694">RNA-binding</keyword>
<keyword id="KW-0808">Transferase</keyword>
<keyword id="KW-0819">tRNA processing</keyword>
<keyword id="KW-0820">tRNA-binding</keyword>
<comment type="function">
    <text evidence="1">Catalyzes the 2-thiolation of uridine at the wobble position (U34) of tRNA, leading to the formation of s(2)U34.</text>
</comment>
<comment type="catalytic activity">
    <reaction evidence="1">
        <text>S-sulfanyl-L-cysteinyl-[protein] + uridine(34) in tRNA + AH2 + ATP = 2-thiouridine(34) in tRNA + L-cysteinyl-[protein] + A + AMP + diphosphate + H(+)</text>
        <dbReference type="Rhea" id="RHEA:47032"/>
        <dbReference type="Rhea" id="RHEA-COMP:10131"/>
        <dbReference type="Rhea" id="RHEA-COMP:11726"/>
        <dbReference type="Rhea" id="RHEA-COMP:11727"/>
        <dbReference type="Rhea" id="RHEA-COMP:11728"/>
        <dbReference type="ChEBI" id="CHEBI:13193"/>
        <dbReference type="ChEBI" id="CHEBI:15378"/>
        <dbReference type="ChEBI" id="CHEBI:17499"/>
        <dbReference type="ChEBI" id="CHEBI:29950"/>
        <dbReference type="ChEBI" id="CHEBI:30616"/>
        <dbReference type="ChEBI" id="CHEBI:33019"/>
        <dbReference type="ChEBI" id="CHEBI:61963"/>
        <dbReference type="ChEBI" id="CHEBI:65315"/>
        <dbReference type="ChEBI" id="CHEBI:87170"/>
        <dbReference type="ChEBI" id="CHEBI:456215"/>
        <dbReference type="EC" id="2.8.1.13"/>
    </reaction>
</comment>
<comment type="subcellular location">
    <subcellularLocation>
        <location evidence="1">Cytoplasm</location>
    </subcellularLocation>
</comment>
<comment type="similarity">
    <text evidence="1">Belongs to the MnmA/TRMU family.</text>
</comment>
<feature type="chain" id="PRO_0000121678" description="tRNA-specific 2-thiouridylase MnmA">
    <location>
        <begin position="1"/>
        <end position="372"/>
    </location>
</feature>
<feature type="region of interest" description="Interaction with target base in tRNA" evidence="1">
    <location>
        <begin position="97"/>
        <end position="99"/>
    </location>
</feature>
<feature type="region of interest" description="Interaction with tRNA" evidence="1">
    <location>
        <begin position="149"/>
        <end position="151"/>
    </location>
</feature>
<feature type="region of interest" description="Interaction with tRNA" evidence="1">
    <location>
        <begin position="309"/>
        <end position="310"/>
    </location>
</feature>
<feature type="active site" description="Nucleophile" evidence="1">
    <location>
        <position position="102"/>
    </location>
</feature>
<feature type="active site" description="Cysteine persulfide intermediate" evidence="1">
    <location>
        <position position="199"/>
    </location>
</feature>
<feature type="binding site" evidence="1">
    <location>
        <begin position="11"/>
        <end position="18"/>
    </location>
    <ligand>
        <name>ATP</name>
        <dbReference type="ChEBI" id="CHEBI:30616"/>
    </ligand>
</feature>
<feature type="binding site" evidence="1">
    <location>
        <position position="37"/>
    </location>
    <ligand>
        <name>ATP</name>
        <dbReference type="ChEBI" id="CHEBI:30616"/>
    </ligand>
</feature>
<feature type="binding site" evidence="1">
    <location>
        <position position="126"/>
    </location>
    <ligand>
        <name>ATP</name>
        <dbReference type="ChEBI" id="CHEBI:30616"/>
    </ligand>
</feature>
<feature type="site" description="Interaction with tRNA" evidence="1">
    <location>
        <position position="127"/>
    </location>
</feature>
<feature type="site" description="Interaction with tRNA" evidence="1">
    <location>
        <position position="342"/>
    </location>
</feature>
<feature type="disulfide bond" description="Alternate" evidence="1">
    <location>
        <begin position="102"/>
        <end position="199"/>
    </location>
</feature>
<proteinExistence type="inferred from homology"/>
<name>MNMA_STAAW</name>
<gene>
    <name evidence="1" type="primary">mnmA</name>
    <name type="synonym">trmU</name>
    <name type="ordered locus">MW1571</name>
</gene>
<protein>
    <recommendedName>
        <fullName evidence="1">tRNA-specific 2-thiouridylase MnmA</fullName>
        <ecNumber evidence="1">2.8.1.13</ecNumber>
    </recommendedName>
</protein>
<reference key="1">
    <citation type="journal article" date="2002" name="Lancet">
        <title>Genome and virulence determinants of high virulence community-acquired MRSA.</title>
        <authorList>
            <person name="Baba T."/>
            <person name="Takeuchi F."/>
            <person name="Kuroda M."/>
            <person name="Yuzawa H."/>
            <person name="Aoki K."/>
            <person name="Oguchi A."/>
            <person name="Nagai Y."/>
            <person name="Iwama N."/>
            <person name="Asano K."/>
            <person name="Naimi T."/>
            <person name="Kuroda H."/>
            <person name="Cui L."/>
            <person name="Yamamoto K."/>
            <person name="Hiramatsu K."/>
        </authorList>
    </citation>
    <scope>NUCLEOTIDE SEQUENCE [LARGE SCALE GENOMIC DNA]</scope>
    <source>
        <strain>MW2</strain>
    </source>
</reference>
<accession>Q8NW84</accession>
<sequence length="372" mass="42177">MSNKDIRVVVGMSGGVDSSVTAHVLKEQGYDVIGIFMKNWDDTDENGVCTATEDYNDVIEVCNQIGIPYYAVNFEKEYWDKVFTYFLDEYKKGRTPNPDVMCNKEIKFKAFLDHAMNLGADYVATGHYARIHRHEDGHVEMLRGVDNNKDQTYFLNQLSQQQLSKVMFPIGDIEKIEVRRIAEEQGLVTAKKKDSTGICFIGEKNFKTFLSQYLPAQPGDMITLDGKKMGKHSGLMYYTIGQRHGLGIGGDGDPWFVVGKNLKDNVLYVEQGFHHDALYSDYLIASDYSFVNPEDNDLDQGFECTAKFRYRQKDTKVFVKRENDHALRVTFAEPVRAITPGQAVVFYQGDVCLGGATIDDVFKNEGQLNYVV</sequence>
<organism>
    <name type="scientific">Staphylococcus aureus (strain MW2)</name>
    <dbReference type="NCBI Taxonomy" id="196620"/>
    <lineage>
        <taxon>Bacteria</taxon>
        <taxon>Bacillati</taxon>
        <taxon>Bacillota</taxon>
        <taxon>Bacilli</taxon>
        <taxon>Bacillales</taxon>
        <taxon>Staphylococcaceae</taxon>
        <taxon>Staphylococcus</taxon>
    </lineage>
</organism>
<dbReference type="EC" id="2.8.1.13" evidence="1"/>
<dbReference type="EMBL" id="BA000033">
    <property type="protein sequence ID" value="BAB95436.1"/>
    <property type="molecule type" value="Genomic_DNA"/>
</dbReference>
<dbReference type="RefSeq" id="WP_000066094.1">
    <property type="nucleotide sequence ID" value="NC_003923.1"/>
</dbReference>
<dbReference type="SMR" id="Q8NW84"/>
<dbReference type="KEGG" id="sam:MW1571"/>
<dbReference type="HOGENOM" id="CLU_035188_1_0_9"/>
<dbReference type="GO" id="GO:0005737">
    <property type="term" value="C:cytoplasm"/>
    <property type="evidence" value="ECO:0007669"/>
    <property type="project" value="UniProtKB-SubCell"/>
</dbReference>
<dbReference type="GO" id="GO:0005524">
    <property type="term" value="F:ATP binding"/>
    <property type="evidence" value="ECO:0007669"/>
    <property type="project" value="UniProtKB-KW"/>
</dbReference>
<dbReference type="GO" id="GO:0000049">
    <property type="term" value="F:tRNA binding"/>
    <property type="evidence" value="ECO:0007669"/>
    <property type="project" value="UniProtKB-KW"/>
</dbReference>
<dbReference type="GO" id="GO:0103016">
    <property type="term" value="F:tRNA-uridine 2-sulfurtransferase activity"/>
    <property type="evidence" value="ECO:0007669"/>
    <property type="project" value="UniProtKB-EC"/>
</dbReference>
<dbReference type="GO" id="GO:0002143">
    <property type="term" value="P:tRNA wobble position uridine thiolation"/>
    <property type="evidence" value="ECO:0007669"/>
    <property type="project" value="TreeGrafter"/>
</dbReference>
<dbReference type="CDD" id="cd01998">
    <property type="entry name" value="MnmA_TRMU-like"/>
    <property type="match status" value="1"/>
</dbReference>
<dbReference type="FunFam" id="2.30.30.280:FF:000001">
    <property type="entry name" value="tRNA-specific 2-thiouridylase MnmA"/>
    <property type="match status" value="1"/>
</dbReference>
<dbReference type="FunFam" id="2.40.30.10:FF:000023">
    <property type="entry name" value="tRNA-specific 2-thiouridylase MnmA"/>
    <property type="match status" value="1"/>
</dbReference>
<dbReference type="FunFam" id="3.40.50.620:FF:000004">
    <property type="entry name" value="tRNA-specific 2-thiouridylase MnmA"/>
    <property type="match status" value="1"/>
</dbReference>
<dbReference type="Gene3D" id="2.30.30.280">
    <property type="entry name" value="Adenine nucleotide alpha hydrolases-like domains"/>
    <property type="match status" value="1"/>
</dbReference>
<dbReference type="Gene3D" id="3.40.50.620">
    <property type="entry name" value="HUPs"/>
    <property type="match status" value="1"/>
</dbReference>
<dbReference type="Gene3D" id="2.40.30.10">
    <property type="entry name" value="Translation factors"/>
    <property type="match status" value="1"/>
</dbReference>
<dbReference type="HAMAP" id="MF_00144">
    <property type="entry name" value="tRNA_thiouridyl_MnmA"/>
    <property type="match status" value="1"/>
</dbReference>
<dbReference type="InterPro" id="IPR004506">
    <property type="entry name" value="MnmA-like"/>
</dbReference>
<dbReference type="InterPro" id="IPR046885">
    <property type="entry name" value="MnmA-like_C"/>
</dbReference>
<dbReference type="InterPro" id="IPR046884">
    <property type="entry name" value="MnmA-like_central"/>
</dbReference>
<dbReference type="InterPro" id="IPR023382">
    <property type="entry name" value="MnmA-like_central_sf"/>
</dbReference>
<dbReference type="InterPro" id="IPR014729">
    <property type="entry name" value="Rossmann-like_a/b/a_fold"/>
</dbReference>
<dbReference type="NCBIfam" id="NF001138">
    <property type="entry name" value="PRK00143.1"/>
    <property type="match status" value="1"/>
</dbReference>
<dbReference type="NCBIfam" id="TIGR00420">
    <property type="entry name" value="trmU"/>
    <property type="match status" value="1"/>
</dbReference>
<dbReference type="PANTHER" id="PTHR11933:SF5">
    <property type="entry name" value="MITOCHONDRIAL TRNA-SPECIFIC 2-THIOURIDYLASE 1"/>
    <property type="match status" value="1"/>
</dbReference>
<dbReference type="PANTHER" id="PTHR11933">
    <property type="entry name" value="TRNA 5-METHYLAMINOMETHYL-2-THIOURIDYLATE -METHYLTRANSFERASE"/>
    <property type="match status" value="1"/>
</dbReference>
<dbReference type="Pfam" id="PF03054">
    <property type="entry name" value="tRNA_Me_trans"/>
    <property type="match status" value="1"/>
</dbReference>
<dbReference type="Pfam" id="PF20258">
    <property type="entry name" value="tRNA_Me_trans_C"/>
    <property type="match status" value="1"/>
</dbReference>
<dbReference type="Pfam" id="PF20259">
    <property type="entry name" value="tRNA_Me_trans_M"/>
    <property type="match status" value="1"/>
</dbReference>
<dbReference type="SUPFAM" id="SSF52402">
    <property type="entry name" value="Adenine nucleotide alpha hydrolases-like"/>
    <property type="match status" value="1"/>
</dbReference>